<reference key="1">
    <citation type="submission" date="2007-07" db="EMBL/GenBank/DDBJ databases">
        <title>Complete sequence of chromosome of Shewanella baltica OS185.</title>
        <authorList>
            <consortium name="US DOE Joint Genome Institute"/>
            <person name="Copeland A."/>
            <person name="Lucas S."/>
            <person name="Lapidus A."/>
            <person name="Barry K."/>
            <person name="Glavina del Rio T."/>
            <person name="Dalin E."/>
            <person name="Tice H."/>
            <person name="Pitluck S."/>
            <person name="Sims D."/>
            <person name="Brettin T."/>
            <person name="Bruce D."/>
            <person name="Detter J.C."/>
            <person name="Han C."/>
            <person name="Schmutz J."/>
            <person name="Larimer F."/>
            <person name="Land M."/>
            <person name="Hauser L."/>
            <person name="Kyrpides N."/>
            <person name="Mikhailova N."/>
            <person name="Brettar I."/>
            <person name="Rodrigues J."/>
            <person name="Konstantinidis K."/>
            <person name="Tiedje J."/>
            <person name="Richardson P."/>
        </authorList>
    </citation>
    <scope>NUCLEOTIDE SEQUENCE [LARGE SCALE GENOMIC DNA]</scope>
    <source>
        <strain>OS185</strain>
    </source>
</reference>
<feature type="chain" id="PRO_1000046466" description="Phosphoribosylformylglycinamidine cyclo-ligase">
    <location>
        <begin position="1"/>
        <end position="345"/>
    </location>
</feature>
<gene>
    <name evidence="1" type="primary">purM</name>
    <name type="ordered locus">Shew185_1730</name>
</gene>
<name>PUR5_SHEB8</name>
<organism>
    <name type="scientific">Shewanella baltica (strain OS185)</name>
    <dbReference type="NCBI Taxonomy" id="402882"/>
    <lineage>
        <taxon>Bacteria</taxon>
        <taxon>Pseudomonadati</taxon>
        <taxon>Pseudomonadota</taxon>
        <taxon>Gammaproteobacteria</taxon>
        <taxon>Alteromonadales</taxon>
        <taxon>Shewanellaceae</taxon>
        <taxon>Shewanella</taxon>
    </lineage>
</organism>
<proteinExistence type="inferred from homology"/>
<accession>A6WM34</accession>
<dbReference type="EC" id="6.3.3.1" evidence="1"/>
<dbReference type="EMBL" id="CP000753">
    <property type="protein sequence ID" value="ABS07873.1"/>
    <property type="molecule type" value="Genomic_DNA"/>
</dbReference>
<dbReference type="RefSeq" id="WP_012088898.1">
    <property type="nucleotide sequence ID" value="NC_009665.1"/>
</dbReference>
<dbReference type="SMR" id="A6WM34"/>
<dbReference type="KEGG" id="sbm:Shew185_1730"/>
<dbReference type="HOGENOM" id="CLU_047116_0_0_6"/>
<dbReference type="UniPathway" id="UPA00074">
    <property type="reaction ID" value="UER00129"/>
</dbReference>
<dbReference type="GO" id="GO:0005829">
    <property type="term" value="C:cytosol"/>
    <property type="evidence" value="ECO:0007669"/>
    <property type="project" value="TreeGrafter"/>
</dbReference>
<dbReference type="GO" id="GO:0005524">
    <property type="term" value="F:ATP binding"/>
    <property type="evidence" value="ECO:0007669"/>
    <property type="project" value="UniProtKB-KW"/>
</dbReference>
<dbReference type="GO" id="GO:0004637">
    <property type="term" value="F:phosphoribosylamine-glycine ligase activity"/>
    <property type="evidence" value="ECO:0007669"/>
    <property type="project" value="TreeGrafter"/>
</dbReference>
<dbReference type="GO" id="GO:0004641">
    <property type="term" value="F:phosphoribosylformylglycinamidine cyclo-ligase activity"/>
    <property type="evidence" value="ECO:0007669"/>
    <property type="project" value="UniProtKB-UniRule"/>
</dbReference>
<dbReference type="GO" id="GO:0006189">
    <property type="term" value="P:'de novo' IMP biosynthetic process"/>
    <property type="evidence" value="ECO:0007669"/>
    <property type="project" value="UniProtKB-UniRule"/>
</dbReference>
<dbReference type="GO" id="GO:0046084">
    <property type="term" value="P:adenine biosynthetic process"/>
    <property type="evidence" value="ECO:0007669"/>
    <property type="project" value="TreeGrafter"/>
</dbReference>
<dbReference type="CDD" id="cd02196">
    <property type="entry name" value="PurM"/>
    <property type="match status" value="1"/>
</dbReference>
<dbReference type="FunFam" id="3.30.1330.10:FF:000001">
    <property type="entry name" value="Phosphoribosylformylglycinamidine cyclo-ligase"/>
    <property type="match status" value="1"/>
</dbReference>
<dbReference type="FunFam" id="3.90.650.10:FF:000001">
    <property type="entry name" value="Phosphoribosylformylglycinamidine cyclo-ligase"/>
    <property type="match status" value="1"/>
</dbReference>
<dbReference type="Gene3D" id="3.90.650.10">
    <property type="entry name" value="PurM-like C-terminal domain"/>
    <property type="match status" value="1"/>
</dbReference>
<dbReference type="Gene3D" id="3.30.1330.10">
    <property type="entry name" value="PurM-like, N-terminal domain"/>
    <property type="match status" value="1"/>
</dbReference>
<dbReference type="HAMAP" id="MF_00741">
    <property type="entry name" value="AIRS"/>
    <property type="match status" value="1"/>
</dbReference>
<dbReference type="InterPro" id="IPR010918">
    <property type="entry name" value="PurM-like_C_dom"/>
</dbReference>
<dbReference type="InterPro" id="IPR036676">
    <property type="entry name" value="PurM-like_C_sf"/>
</dbReference>
<dbReference type="InterPro" id="IPR016188">
    <property type="entry name" value="PurM-like_N"/>
</dbReference>
<dbReference type="InterPro" id="IPR036921">
    <property type="entry name" value="PurM-like_N_sf"/>
</dbReference>
<dbReference type="InterPro" id="IPR004733">
    <property type="entry name" value="PurM_cligase"/>
</dbReference>
<dbReference type="NCBIfam" id="TIGR00878">
    <property type="entry name" value="purM"/>
    <property type="match status" value="1"/>
</dbReference>
<dbReference type="PANTHER" id="PTHR10520:SF12">
    <property type="entry name" value="TRIFUNCTIONAL PURINE BIOSYNTHETIC PROTEIN ADENOSINE-3"/>
    <property type="match status" value="1"/>
</dbReference>
<dbReference type="PANTHER" id="PTHR10520">
    <property type="entry name" value="TRIFUNCTIONAL PURINE BIOSYNTHETIC PROTEIN ADENOSINE-3-RELATED"/>
    <property type="match status" value="1"/>
</dbReference>
<dbReference type="Pfam" id="PF00586">
    <property type="entry name" value="AIRS"/>
    <property type="match status" value="1"/>
</dbReference>
<dbReference type="Pfam" id="PF02769">
    <property type="entry name" value="AIRS_C"/>
    <property type="match status" value="1"/>
</dbReference>
<dbReference type="SUPFAM" id="SSF56042">
    <property type="entry name" value="PurM C-terminal domain-like"/>
    <property type="match status" value="1"/>
</dbReference>
<dbReference type="SUPFAM" id="SSF55326">
    <property type="entry name" value="PurM N-terminal domain-like"/>
    <property type="match status" value="1"/>
</dbReference>
<comment type="catalytic activity">
    <reaction evidence="1">
        <text>2-formamido-N(1)-(5-O-phospho-beta-D-ribosyl)acetamidine + ATP = 5-amino-1-(5-phospho-beta-D-ribosyl)imidazole + ADP + phosphate + H(+)</text>
        <dbReference type="Rhea" id="RHEA:23032"/>
        <dbReference type="ChEBI" id="CHEBI:15378"/>
        <dbReference type="ChEBI" id="CHEBI:30616"/>
        <dbReference type="ChEBI" id="CHEBI:43474"/>
        <dbReference type="ChEBI" id="CHEBI:137981"/>
        <dbReference type="ChEBI" id="CHEBI:147287"/>
        <dbReference type="ChEBI" id="CHEBI:456216"/>
        <dbReference type="EC" id="6.3.3.1"/>
    </reaction>
</comment>
<comment type="pathway">
    <text evidence="1">Purine metabolism; IMP biosynthesis via de novo pathway; 5-amino-1-(5-phospho-D-ribosyl)imidazole from N(2)-formyl-N(1)-(5-phospho-D-ribosyl)glycinamide: step 2/2.</text>
</comment>
<comment type="subcellular location">
    <subcellularLocation>
        <location evidence="1">Cytoplasm</location>
    </subcellularLocation>
</comment>
<comment type="similarity">
    <text evidence="1">Belongs to the AIR synthase family.</text>
</comment>
<evidence type="ECO:0000255" key="1">
    <source>
        <dbReference type="HAMAP-Rule" id="MF_00741"/>
    </source>
</evidence>
<protein>
    <recommendedName>
        <fullName evidence="1">Phosphoribosylformylglycinamidine cyclo-ligase</fullName>
        <ecNumber evidence="1">6.3.3.1</ecNumber>
    </recommendedName>
    <alternativeName>
        <fullName evidence="1">AIR synthase</fullName>
    </alternativeName>
    <alternativeName>
        <fullName evidence="1">AIRS</fullName>
    </alternativeName>
    <alternativeName>
        <fullName evidence="1">Phosphoribosyl-aminoimidazole synthetase</fullName>
    </alternativeName>
</protein>
<keyword id="KW-0067">ATP-binding</keyword>
<keyword id="KW-0963">Cytoplasm</keyword>
<keyword id="KW-0436">Ligase</keyword>
<keyword id="KW-0547">Nucleotide-binding</keyword>
<keyword id="KW-0658">Purine biosynthesis</keyword>
<sequence length="345" mass="36749">MSTPTPLSYKDAGVDIDAGNALVSNIKAAVKRTRRPEVMGNLGGFGALCEIPTKYKQPVLVSGTDGVGTKLRLAIDYKKHDTVGIDLVAMCVNDLIVQGAEPLFFLDYYATGKLDVETATSVVNGIGEGCFQSGCALIGGETAEMPGMYEGEDYDLAGFCVGVVEKADIIDGSKVAAGDALIALASSGPHSNGYSLVRKVLEVSQADPQQDLNGKPLIEHLLEPTKIYVKSLLKLIAASDVHAMAHITGGGFWENIPRVLPDNLKAVIQGDSWQWPAVFSWLMENGNIAEYEMYRTFNCGVGMLVALPADKVDAALSLLAAEGEQAWLIGAIADREGNEEQVEIL</sequence>